<reference key="1">
    <citation type="journal article" date="1990" name="Virology">
        <title>Genome organization and taxonomic position of human papillomavirus type 47 inferred from its DNA sequence.</title>
        <authorList>
            <person name="Kiyono T."/>
            <person name="Adachi A."/>
            <person name="Ishibashi M."/>
        </authorList>
    </citation>
    <scope>NUCLEOTIDE SEQUENCE [GENOMIC DNA]</scope>
</reference>
<protein>
    <recommendedName>
        <fullName>Protein E8^E2C</fullName>
    </recommendedName>
</protein>
<accession>P0DOD5</accession>
<name>VE8E2_HPV47</name>
<proteinExistence type="inferred from homology"/>
<organism>
    <name type="scientific">Human papillomavirus 47</name>
    <dbReference type="NCBI Taxonomy" id="10594"/>
    <lineage>
        <taxon>Viruses</taxon>
        <taxon>Monodnaviria</taxon>
        <taxon>Shotokuvirae</taxon>
        <taxon>Cossaviricota</taxon>
        <taxon>Papovaviricetes</taxon>
        <taxon>Zurhausenvirales</taxon>
        <taxon>Papillomaviridae</taxon>
        <taxon>Firstpapillomavirinae</taxon>
        <taxon>Betapapillomavirus</taxon>
        <taxon>Betapapillomavirus 1</taxon>
    </lineage>
</organism>
<dbReference type="EMBL" id="M32305">
    <property type="status" value="NOT_ANNOTATED_CDS"/>
    <property type="molecule type" value="Genomic_DNA"/>
</dbReference>
<dbReference type="SMR" id="P0DOD5"/>
<dbReference type="Proteomes" id="UP000008697">
    <property type="component" value="Genome"/>
</dbReference>
<dbReference type="GO" id="GO:0042025">
    <property type="term" value="C:host cell nucleus"/>
    <property type="evidence" value="ECO:0007669"/>
    <property type="project" value="UniProtKB-SubCell"/>
</dbReference>
<dbReference type="GO" id="GO:0003677">
    <property type="term" value="F:DNA binding"/>
    <property type="evidence" value="ECO:0007669"/>
    <property type="project" value="InterPro"/>
</dbReference>
<dbReference type="GO" id="GO:0003700">
    <property type="term" value="F:DNA-binding transcription factor activity"/>
    <property type="evidence" value="ECO:0007669"/>
    <property type="project" value="InterPro"/>
</dbReference>
<dbReference type="GO" id="GO:0006275">
    <property type="term" value="P:regulation of DNA replication"/>
    <property type="evidence" value="ECO:0007669"/>
    <property type="project" value="InterPro"/>
</dbReference>
<dbReference type="Gene3D" id="3.30.70.330">
    <property type="match status" value="1"/>
</dbReference>
<dbReference type="InterPro" id="IPR035975">
    <property type="entry name" value="E2/EBNA1_C_sf"/>
</dbReference>
<dbReference type="InterPro" id="IPR012677">
    <property type="entry name" value="Nucleotide-bd_a/b_plait_sf"/>
</dbReference>
<dbReference type="InterPro" id="IPR000427">
    <property type="entry name" value="Papillomavirus_E2_C"/>
</dbReference>
<dbReference type="Pfam" id="PF00511">
    <property type="entry name" value="PPV_E2_C"/>
    <property type="match status" value="1"/>
</dbReference>
<dbReference type="SUPFAM" id="SSF54957">
    <property type="entry name" value="Viral DNA-binding domain"/>
    <property type="match status" value="1"/>
</dbReference>
<comment type="function">
    <text evidence="1">Plays a role in limiting the replication of viral DNA in keratinocytes. Recruits the host NCoR/SMRT complex to viral replication foci to mediate repression of both viral replication and transcription.</text>
</comment>
<comment type="subcellular location">
    <subcellularLocation>
        <location evidence="1">Host nucleus</location>
    </subcellularLocation>
</comment>
<comment type="similarity">
    <text evidence="3">Belongs to the papillomaviridae E8^E2C protein family.</text>
</comment>
<organismHost>
    <name type="scientific">Homo sapiens</name>
    <name type="common">Human</name>
    <dbReference type="NCBI Taxonomy" id="9606"/>
</organismHost>
<keyword id="KW-1048">Host nucleus</keyword>
<evidence type="ECO:0000250" key="1">
    <source>
        <dbReference type="UniProtKB" id="P0DKA0"/>
    </source>
</evidence>
<evidence type="ECO:0000256" key="2">
    <source>
        <dbReference type="SAM" id="MobiDB-lite"/>
    </source>
</evidence>
<evidence type="ECO:0000305" key="3"/>
<feature type="chain" id="PRO_0000438760" description="Protein E8^E2C">
    <location>
        <begin position="1"/>
        <end position="315"/>
    </location>
</feature>
<feature type="region of interest" description="Disordered" evidence="2">
    <location>
        <begin position="1"/>
        <end position="215"/>
    </location>
</feature>
<feature type="compositionally biased region" description="Low complexity" evidence="2">
    <location>
        <begin position="20"/>
        <end position="38"/>
    </location>
</feature>
<feature type="compositionally biased region" description="Polar residues" evidence="2">
    <location>
        <begin position="41"/>
        <end position="52"/>
    </location>
</feature>
<feature type="compositionally biased region" description="Basic residues" evidence="2">
    <location>
        <begin position="57"/>
        <end position="83"/>
    </location>
</feature>
<feature type="compositionally biased region" description="Low complexity" evidence="2">
    <location>
        <begin position="84"/>
        <end position="106"/>
    </location>
</feature>
<feature type="compositionally biased region" description="Low complexity" evidence="2">
    <location>
        <begin position="119"/>
        <end position="148"/>
    </location>
</feature>
<feature type="compositionally biased region" description="Basic and acidic residues" evidence="2">
    <location>
        <begin position="188"/>
        <end position="198"/>
    </location>
</feature>
<sequence>MKLKMLLLSSTPPGSPGGQTDPDTSSKTPTTTTAATDTSPRRQSINKQSQQTETKRRGYGRRPSSRTRRPQTHQRRSRSRSRSRSSSQTHSSTTTTTTTYRSRSTSLNKTRARSRSRSTSRSTSTTSRRGGRGSSTRQRSRSPSTYTSKRSREGNTRGRGRGRQGRAGSSGGREQRRRRRSFSTSPDSSKRVRRESPKYRGVSPSEVGKQLRSVGAKHSGRLGRLLEEARDPPVILVRGDANTLKCFRNRARNKYRGLFRSFSTTFSWVAGDSIERLGRSRMLISFSCLTQRRDFDDAVKYPKGVEWSYGSLDSL</sequence>